<dbReference type="EMBL" id="CP000378">
    <property type="protein sequence ID" value="ABF77666.1"/>
    <property type="molecule type" value="Genomic_DNA"/>
</dbReference>
<dbReference type="SMR" id="Q1BRT9"/>
<dbReference type="HOGENOM" id="CLU_086499_3_2_4"/>
<dbReference type="GO" id="GO:0022625">
    <property type="term" value="C:cytosolic large ribosomal subunit"/>
    <property type="evidence" value="ECO:0007669"/>
    <property type="project" value="TreeGrafter"/>
</dbReference>
<dbReference type="GO" id="GO:0003729">
    <property type="term" value="F:mRNA binding"/>
    <property type="evidence" value="ECO:0007669"/>
    <property type="project" value="TreeGrafter"/>
</dbReference>
<dbReference type="GO" id="GO:0003735">
    <property type="term" value="F:structural constituent of ribosome"/>
    <property type="evidence" value="ECO:0007669"/>
    <property type="project" value="InterPro"/>
</dbReference>
<dbReference type="GO" id="GO:0006412">
    <property type="term" value="P:translation"/>
    <property type="evidence" value="ECO:0007669"/>
    <property type="project" value="UniProtKB-UniRule"/>
</dbReference>
<dbReference type="CDD" id="cd00387">
    <property type="entry name" value="Ribosomal_L7_L12"/>
    <property type="match status" value="1"/>
</dbReference>
<dbReference type="FunFam" id="3.30.1390.10:FF:000001">
    <property type="entry name" value="50S ribosomal protein L7/L12"/>
    <property type="match status" value="1"/>
</dbReference>
<dbReference type="Gene3D" id="3.30.1390.10">
    <property type="match status" value="1"/>
</dbReference>
<dbReference type="Gene3D" id="1.20.5.710">
    <property type="entry name" value="Single helix bin"/>
    <property type="match status" value="1"/>
</dbReference>
<dbReference type="HAMAP" id="MF_00368">
    <property type="entry name" value="Ribosomal_bL12"/>
    <property type="match status" value="1"/>
</dbReference>
<dbReference type="InterPro" id="IPR000206">
    <property type="entry name" value="Ribosomal_bL12"/>
</dbReference>
<dbReference type="InterPro" id="IPR013823">
    <property type="entry name" value="Ribosomal_bL12_C"/>
</dbReference>
<dbReference type="InterPro" id="IPR014719">
    <property type="entry name" value="Ribosomal_bL12_C/ClpS-like"/>
</dbReference>
<dbReference type="InterPro" id="IPR008932">
    <property type="entry name" value="Ribosomal_bL12_oligo"/>
</dbReference>
<dbReference type="InterPro" id="IPR036235">
    <property type="entry name" value="Ribosomal_bL12_oligo_N_sf"/>
</dbReference>
<dbReference type="NCBIfam" id="TIGR00855">
    <property type="entry name" value="L12"/>
    <property type="match status" value="1"/>
</dbReference>
<dbReference type="PANTHER" id="PTHR45987">
    <property type="entry name" value="39S RIBOSOMAL PROTEIN L12"/>
    <property type="match status" value="1"/>
</dbReference>
<dbReference type="PANTHER" id="PTHR45987:SF4">
    <property type="entry name" value="LARGE RIBOSOMAL SUBUNIT PROTEIN BL12M"/>
    <property type="match status" value="1"/>
</dbReference>
<dbReference type="Pfam" id="PF00542">
    <property type="entry name" value="Ribosomal_L12"/>
    <property type="match status" value="1"/>
</dbReference>
<dbReference type="Pfam" id="PF16320">
    <property type="entry name" value="Ribosomal_L12_N"/>
    <property type="match status" value="1"/>
</dbReference>
<dbReference type="SUPFAM" id="SSF54736">
    <property type="entry name" value="ClpS-like"/>
    <property type="match status" value="1"/>
</dbReference>
<dbReference type="SUPFAM" id="SSF48300">
    <property type="entry name" value="Ribosomal protein L7/12, oligomerisation (N-terminal) domain"/>
    <property type="match status" value="1"/>
</dbReference>
<evidence type="ECO:0000255" key="1">
    <source>
        <dbReference type="HAMAP-Rule" id="MF_00368"/>
    </source>
</evidence>
<evidence type="ECO:0000305" key="2"/>
<gene>
    <name evidence="1" type="primary">rplL</name>
    <name type="ordered locus">Bcen_2768</name>
</gene>
<sequence length="124" mass="12543">MAIAKEDILAAVEGMTVLELNELVKAFEEKFGVSAAAVAVAGPAGGGAAAAAEEKTEFTVVLAEAGANKVSVIKAVRELTGLGLKEAKDLVDGAPKPVKEGVDKAAAEEAKKKLEEAGAKVEVK</sequence>
<keyword id="KW-0687">Ribonucleoprotein</keyword>
<keyword id="KW-0689">Ribosomal protein</keyword>
<name>RL7_BURO1</name>
<protein>
    <recommendedName>
        <fullName evidence="1">Large ribosomal subunit protein bL12</fullName>
    </recommendedName>
    <alternativeName>
        <fullName evidence="2">50S ribosomal protein L7/L12</fullName>
    </alternativeName>
</protein>
<feature type="chain" id="PRO_1000006968" description="Large ribosomal subunit protein bL12">
    <location>
        <begin position="1"/>
        <end position="124"/>
    </location>
</feature>
<accession>Q1BRT9</accession>
<comment type="function">
    <text evidence="1">Forms part of the ribosomal stalk which helps the ribosome interact with GTP-bound translation factors. Is thus essential for accurate translation.</text>
</comment>
<comment type="subunit">
    <text evidence="1">Homodimer. Part of the ribosomal stalk of the 50S ribosomal subunit. Forms a multimeric L10(L12)X complex, where L10 forms an elongated spine to which 2 to 4 L12 dimers bind in a sequential fashion. Binds GTP-bound translation factors.</text>
</comment>
<comment type="similarity">
    <text evidence="1">Belongs to the bacterial ribosomal protein bL12 family.</text>
</comment>
<proteinExistence type="inferred from homology"/>
<organism>
    <name type="scientific">Burkholderia orbicola (strain AU 1054)</name>
    <dbReference type="NCBI Taxonomy" id="331271"/>
    <lineage>
        <taxon>Bacteria</taxon>
        <taxon>Pseudomonadati</taxon>
        <taxon>Pseudomonadota</taxon>
        <taxon>Betaproteobacteria</taxon>
        <taxon>Burkholderiales</taxon>
        <taxon>Burkholderiaceae</taxon>
        <taxon>Burkholderia</taxon>
        <taxon>Burkholderia cepacia complex</taxon>
        <taxon>Burkholderia orbicola</taxon>
    </lineage>
</organism>
<reference key="1">
    <citation type="submission" date="2006-05" db="EMBL/GenBank/DDBJ databases">
        <title>Complete sequence of chromosome 1 of Burkholderia cenocepacia AU 1054.</title>
        <authorList>
            <consortium name="US DOE Joint Genome Institute"/>
            <person name="Copeland A."/>
            <person name="Lucas S."/>
            <person name="Lapidus A."/>
            <person name="Barry K."/>
            <person name="Detter J.C."/>
            <person name="Glavina del Rio T."/>
            <person name="Hammon N."/>
            <person name="Israni S."/>
            <person name="Dalin E."/>
            <person name="Tice H."/>
            <person name="Pitluck S."/>
            <person name="Chain P."/>
            <person name="Malfatti S."/>
            <person name="Shin M."/>
            <person name="Vergez L."/>
            <person name="Schmutz J."/>
            <person name="Larimer F."/>
            <person name="Land M."/>
            <person name="Hauser L."/>
            <person name="Kyrpides N."/>
            <person name="Lykidis A."/>
            <person name="LiPuma J.J."/>
            <person name="Konstantinidis K."/>
            <person name="Tiedje J.M."/>
            <person name="Richardson P."/>
        </authorList>
    </citation>
    <scope>NUCLEOTIDE SEQUENCE [LARGE SCALE GENOMIC DNA]</scope>
    <source>
        <strain>AU 1054</strain>
    </source>
</reference>